<organism>
    <name type="scientific">Haemophilus influenzae (strain PittEE)</name>
    <dbReference type="NCBI Taxonomy" id="374930"/>
    <lineage>
        <taxon>Bacteria</taxon>
        <taxon>Pseudomonadati</taxon>
        <taxon>Pseudomonadota</taxon>
        <taxon>Gammaproteobacteria</taxon>
        <taxon>Pasteurellales</taxon>
        <taxon>Pasteurellaceae</taxon>
        <taxon>Haemophilus</taxon>
    </lineage>
</organism>
<comment type="catalytic activity">
    <reaction evidence="1">
        <text>1-(5-phospho-beta-D-ribosyl)-5-[(5-phospho-beta-D-ribosylamino)methylideneamino]imidazole-4-carboxamide = 5-[(5-phospho-1-deoxy-D-ribulos-1-ylimino)methylamino]-1-(5-phospho-beta-D-ribosyl)imidazole-4-carboxamide</text>
        <dbReference type="Rhea" id="RHEA:15469"/>
        <dbReference type="ChEBI" id="CHEBI:58435"/>
        <dbReference type="ChEBI" id="CHEBI:58525"/>
        <dbReference type="EC" id="5.3.1.16"/>
    </reaction>
</comment>
<comment type="pathway">
    <text evidence="1">Amino-acid biosynthesis; L-histidine biosynthesis; L-histidine from 5-phospho-alpha-D-ribose 1-diphosphate: step 4/9.</text>
</comment>
<comment type="subcellular location">
    <subcellularLocation>
        <location evidence="1">Cytoplasm</location>
    </subcellularLocation>
</comment>
<comment type="similarity">
    <text evidence="1">Belongs to the HisA/HisF family.</text>
</comment>
<sequence>MKQSIIIPALDLINGQVVRLHQGDYAKQTTYSDNPIKQFDNYVRQGAKQLHLVDLTGAKNPQSRQTALIGKIVEATQCKVQVGGGIRTEQDVADLLAVGANRVVIGSTAVTHRSMVKNWFIKYGAEKFVLALDVNINASGQKIVAISGWQEESGVLLETLIEDFQTVGLQQVLCTDISRDGTLTGSNIGLYQEICEKYPPIQFQSSGGIGSLADIEALKGTGVSGVIVGRALLEGKFTLSEAIKCWQNG</sequence>
<dbReference type="EC" id="5.3.1.16" evidence="1"/>
<dbReference type="EMBL" id="CP000671">
    <property type="protein sequence ID" value="ABQ97617.1"/>
    <property type="molecule type" value="Genomic_DNA"/>
</dbReference>
<dbReference type="SMR" id="A5UA16"/>
<dbReference type="KEGG" id="hip:CGSHiEE_00625"/>
<dbReference type="HOGENOM" id="CLU_048577_1_2_6"/>
<dbReference type="UniPathway" id="UPA00031">
    <property type="reaction ID" value="UER00009"/>
</dbReference>
<dbReference type="GO" id="GO:0005737">
    <property type="term" value="C:cytoplasm"/>
    <property type="evidence" value="ECO:0007669"/>
    <property type="project" value="UniProtKB-SubCell"/>
</dbReference>
<dbReference type="GO" id="GO:0003949">
    <property type="term" value="F:1-(5-phosphoribosyl)-5-[(5-phosphoribosylamino)methylideneamino]imidazole-4-carboxamide isomerase activity"/>
    <property type="evidence" value="ECO:0007669"/>
    <property type="project" value="UniProtKB-UniRule"/>
</dbReference>
<dbReference type="GO" id="GO:0000105">
    <property type="term" value="P:L-histidine biosynthetic process"/>
    <property type="evidence" value="ECO:0007669"/>
    <property type="project" value="UniProtKB-UniRule"/>
</dbReference>
<dbReference type="GO" id="GO:0000162">
    <property type="term" value="P:L-tryptophan biosynthetic process"/>
    <property type="evidence" value="ECO:0007669"/>
    <property type="project" value="TreeGrafter"/>
</dbReference>
<dbReference type="CDD" id="cd04732">
    <property type="entry name" value="HisA"/>
    <property type="match status" value="1"/>
</dbReference>
<dbReference type="FunFam" id="3.20.20.70:FF:000009">
    <property type="entry name" value="1-(5-phosphoribosyl)-5-[(5-phosphoribosylamino)methylideneamino] imidazole-4-carboxamide isomerase"/>
    <property type="match status" value="1"/>
</dbReference>
<dbReference type="Gene3D" id="3.20.20.70">
    <property type="entry name" value="Aldolase class I"/>
    <property type="match status" value="1"/>
</dbReference>
<dbReference type="HAMAP" id="MF_01014">
    <property type="entry name" value="HisA"/>
    <property type="match status" value="1"/>
</dbReference>
<dbReference type="InterPro" id="IPR013785">
    <property type="entry name" value="Aldolase_TIM"/>
</dbReference>
<dbReference type="InterPro" id="IPR006062">
    <property type="entry name" value="His_biosynth"/>
</dbReference>
<dbReference type="InterPro" id="IPR006063">
    <property type="entry name" value="HisA_bact_arch"/>
</dbReference>
<dbReference type="InterPro" id="IPR044524">
    <property type="entry name" value="Isoase_HisA-like"/>
</dbReference>
<dbReference type="InterPro" id="IPR023016">
    <property type="entry name" value="Isoase_HisA-like_bact"/>
</dbReference>
<dbReference type="InterPro" id="IPR011060">
    <property type="entry name" value="RibuloseP-bd_barrel"/>
</dbReference>
<dbReference type="NCBIfam" id="TIGR00007">
    <property type="entry name" value="1-(5-phosphoribosyl)-5-[(5-phosphoribosylamino)methylideneamino]imidazole-4-carboxamide isomerase"/>
    <property type="match status" value="1"/>
</dbReference>
<dbReference type="PANTHER" id="PTHR43090">
    <property type="entry name" value="1-(5-PHOSPHORIBOSYL)-5-[(5-PHOSPHORIBOSYLAMINO)METHYLIDENEAMINO] IMIDAZOLE-4-CARBOXAMIDE ISOMERASE"/>
    <property type="match status" value="1"/>
</dbReference>
<dbReference type="PANTHER" id="PTHR43090:SF2">
    <property type="entry name" value="1-(5-PHOSPHORIBOSYL)-5-[(5-PHOSPHORIBOSYLAMINO)METHYLIDENEAMINO] IMIDAZOLE-4-CARBOXAMIDE ISOMERASE"/>
    <property type="match status" value="1"/>
</dbReference>
<dbReference type="Pfam" id="PF00977">
    <property type="entry name" value="His_biosynth"/>
    <property type="match status" value="1"/>
</dbReference>
<dbReference type="SUPFAM" id="SSF51366">
    <property type="entry name" value="Ribulose-phoshate binding barrel"/>
    <property type="match status" value="1"/>
</dbReference>
<reference key="1">
    <citation type="journal article" date="2007" name="Genome Biol.">
        <title>Characterization and modeling of the Haemophilus influenzae core and supragenomes based on the complete genomic sequences of Rd and 12 clinical nontypeable strains.</title>
        <authorList>
            <person name="Hogg J.S."/>
            <person name="Hu F.Z."/>
            <person name="Janto B."/>
            <person name="Boissy R."/>
            <person name="Hayes J."/>
            <person name="Keefe R."/>
            <person name="Post J.C."/>
            <person name="Ehrlich G.D."/>
        </authorList>
    </citation>
    <scope>NUCLEOTIDE SEQUENCE [LARGE SCALE GENOMIC DNA]</scope>
    <source>
        <strain>PittEE</strain>
    </source>
</reference>
<accession>A5UA16</accession>
<gene>
    <name evidence="1" type="primary">hisA</name>
    <name type="ordered locus">CGSHiEE_00625</name>
</gene>
<feature type="chain" id="PRO_1000063210" description="1-(5-phosphoribosyl)-5-[(5-phosphoribosylamino)methylideneamino] imidazole-4-carboxamide isomerase">
    <location>
        <begin position="1"/>
        <end position="249"/>
    </location>
</feature>
<feature type="active site" description="Proton acceptor" evidence="1">
    <location>
        <position position="11"/>
    </location>
</feature>
<feature type="active site" description="Proton donor" evidence="1">
    <location>
        <position position="133"/>
    </location>
</feature>
<evidence type="ECO:0000255" key="1">
    <source>
        <dbReference type="HAMAP-Rule" id="MF_01014"/>
    </source>
</evidence>
<proteinExistence type="inferred from homology"/>
<protein>
    <recommendedName>
        <fullName evidence="1">1-(5-phosphoribosyl)-5-[(5-phosphoribosylamino)methylideneamino] imidazole-4-carboxamide isomerase</fullName>
        <ecNumber evidence="1">5.3.1.16</ecNumber>
    </recommendedName>
    <alternativeName>
        <fullName evidence="1">Phosphoribosylformimino-5-aminoimidazole carboxamide ribotide isomerase</fullName>
    </alternativeName>
</protein>
<name>HIS4_HAEIE</name>
<keyword id="KW-0028">Amino-acid biosynthesis</keyword>
<keyword id="KW-0963">Cytoplasm</keyword>
<keyword id="KW-0368">Histidine biosynthesis</keyword>
<keyword id="KW-0413">Isomerase</keyword>